<organism>
    <name type="scientific">Metamycoplasma hominis</name>
    <name type="common">Mycoplasma hominis</name>
    <dbReference type="NCBI Taxonomy" id="2098"/>
    <lineage>
        <taxon>Bacteria</taxon>
        <taxon>Bacillati</taxon>
        <taxon>Mycoplasmatota</taxon>
        <taxon>Mycoplasmoidales</taxon>
        <taxon>Metamycoplasmataceae</taxon>
        <taxon>Metamycoplasma</taxon>
    </lineage>
</organism>
<comment type="catalytic activity">
    <reaction>
        <text>L-arginine + H2O = L-citrulline + NH4(+)</text>
        <dbReference type="Rhea" id="RHEA:19597"/>
        <dbReference type="ChEBI" id="CHEBI:15377"/>
        <dbReference type="ChEBI" id="CHEBI:28938"/>
        <dbReference type="ChEBI" id="CHEBI:32682"/>
        <dbReference type="ChEBI" id="CHEBI:57743"/>
        <dbReference type="EC" id="3.5.3.6"/>
    </reaction>
</comment>
<comment type="pathway">
    <text>Amino-acid degradation; L-arginine degradation via ADI pathway; carbamoyl phosphate from L-arginine: step 1/2.</text>
</comment>
<comment type="subcellular location">
    <subcellularLocation>
        <location evidence="2">Cytoplasm</location>
    </subcellularLocation>
</comment>
<comment type="similarity">
    <text evidence="2">Belongs to the arginine deiminase family.</text>
</comment>
<accession>P41141</accession>
<feature type="initiator methionine" description="Removed" evidence="1">
    <location>
        <position position="1"/>
    </location>
</feature>
<feature type="chain" id="PRO_0000182221" description="Arginine deiminase">
    <location>
        <begin position="2"/>
        <end position="409"/>
    </location>
</feature>
<feature type="active site" description="Amidino-cysteine intermediate" evidence="1">
    <location>
        <position position="397"/>
    </location>
</feature>
<protein>
    <recommendedName>
        <fullName>Arginine deiminase</fullName>
        <shortName>ADI</shortName>
        <ecNumber>3.5.3.6</ecNumber>
    </recommendedName>
    <alternativeName>
        <fullName>Arginine dihydrolase</fullName>
        <shortName>AD</shortName>
    </alternativeName>
</protein>
<dbReference type="EC" id="3.5.3.6"/>
<dbReference type="EMBL" id="D13314">
    <property type="protein sequence ID" value="BAA02571.1"/>
    <property type="molecule type" value="Genomic_DNA"/>
</dbReference>
<dbReference type="SMR" id="P41141"/>
<dbReference type="SABIO-RK" id="P41141"/>
<dbReference type="UniPathway" id="UPA00254">
    <property type="reaction ID" value="UER00364"/>
</dbReference>
<dbReference type="GO" id="GO:0005737">
    <property type="term" value="C:cytoplasm"/>
    <property type="evidence" value="ECO:0007669"/>
    <property type="project" value="UniProtKB-SubCell"/>
</dbReference>
<dbReference type="GO" id="GO:0016990">
    <property type="term" value="F:arginine deiminase activity"/>
    <property type="evidence" value="ECO:0007669"/>
    <property type="project" value="UniProtKB-UniRule"/>
</dbReference>
<dbReference type="GO" id="GO:0019547">
    <property type="term" value="P:arginine catabolic process to ornithine"/>
    <property type="evidence" value="ECO:0007669"/>
    <property type="project" value="UniProtKB-UniRule"/>
</dbReference>
<dbReference type="GO" id="GO:0019546">
    <property type="term" value="P:arginine deiminase pathway"/>
    <property type="evidence" value="ECO:0007669"/>
    <property type="project" value="TreeGrafter"/>
</dbReference>
<dbReference type="Gene3D" id="1.10.3930.10">
    <property type="entry name" value="Arginine deiminase"/>
    <property type="match status" value="1"/>
</dbReference>
<dbReference type="Gene3D" id="3.75.10.10">
    <property type="entry name" value="L-arginine/glycine Amidinotransferase, Chain A"/>
    <property type="match status" value="1"/>
</dbReference>
<dbReference type="HAMAP" id="MF_00242">
    <property type="entry name" value="Arg_deiminase"/>
    <property type="match status" value="1"/>
</dbReference>
<dbReference type="InterPro" id="IPR003876">
    <property type="entry name" value="Arg_deiminase"/>
</dbReference>
<dbReference type="NCBIfam" id="TIGR01078">
    <property type="entry name" value="arcA"/>
    <property type="match status" value="1"/>
</dbReference>
<dbReference type="PANTHER" id="PTHR47271">
    <property type="entry name" value="ARGININE DEIMINASE"/>
    <property type="match status" value="1"/>
</dbReference>
<dbReference type="PANTHER" id="PTHR47271:SF2">
    <property type="entry name" value="ARGININE DEIMINASE"/>
    <property type="match status" value="1"/>
</dbReference>
<dbReference type="Pfam" id="PF02274">
    <property type="entry name" value="ADI"/>
    <property type="match status" value="1"/>
</dbReference>
<dbReference type="PIRSF" id="PIRSF006356">
    <property type="entry name" value="Arg_deiminase"/>
    <property type="match status" value="1"/>
</dbReference>
<dbReference type="PRINTS" id="PR01466">
    <property type="entry name" value="ARGDEIMINASE"/>
</dbReference>
<dbReference type="SUPFAM" id="SSF55909">
    <property type="entry name" value="Pentein"/>
    <property type="match status" value="1"/>
</dbReference>
<keyword id="KW-0056">Arginine metabolism</keyword>
<keyword id="KW-0963">Cytoplasm</keyword>
<keyword id="KW-0378">Hydrolase</keyword>
<sequence length="409" mass="46313">MSVFDSKFNGIHVYSEIGELETVLVHEPGREIDYITPARLDELLFSAILESHDARKEHQSFVKIMKDRGINVVELTDLVAETYDLASKAAKEEFIETFLEETVPVLTEANKKAVRAFLLSKPTHEMVEFMMSGITKYELGVESENELIVDPMPNLYFTRDPFASVGNGVTIHFMRYIVRRRETLFARFVFRNHPKLVKTPWYYDPAMKMPIEGGDVFIYNNETLVVGVSERTDLDTITLLAKNIKANKEVEFKRIVAINVPKWTNLMHLDTWLTMLDKNKFLYSPIANDVFKFWDYDLVNGGAEPQPQLNGLPLDKLLASIINKEPVLIPIGGAGATEMEIARETNFDGTNYLAIKPGLVIGYDRNEKTNAALKAAGITVLPFHGNQLSLGMGNARCMSMPLSRKDVKW</sequence>
<reference key="1">
    <citation type="journal article" date="1992" name="Microbiol. Immunol.">
        <title>Nucleotide sequence of the arginine deiminase gene of Mycoplasma hominis.</title>
        <authorList>
            <person name="Harasawa R."/>
            <person name="Koshimizu K."/>
            <person name="Kitagawa M."/>
            <person name="Asada K."/>
            <person name="Kato I."/>
        </authorList>
    </citation>
    <scope>NUCLEOTIDE SEQUENCE [GENOMIC DNA]</scope>
</reference>
<evidence type="ECO:0000250" key="1"/>
<evidence type="ECO:0000305" key="2"/>
<proteinExistence type="inferred from homology"/>
<gene>
    <name type="primary">arcA</name>
</gene>
<name>ARCA_METHO</name>